<comment type="function">
    <text evidence="1">One of the primary rRNA binding proteins, it binds directly to 16S rRNA where it nucleates assembly of the head domain of the 30S subunit. Is located at the subunit interface close to the decoding center, probably blocks exit of the E-site tRNA.</text>
</comment>
<comment type="subunit">
    <text evidence="1">Part of the 30S ribosomal subunit. Contacts proteins S9 and S11.</text>
</comment>
<comment type="similarity">
    <text evidence="1">Belongs to the universal ribosomal protein uS7 family.</text>
</comment>
<dbReference type="EMBL" id="AP009044">
    <property type="protein sequence ID" value="BAF53565.1"/>
    <property type="molecule type" value="Genomic_DNA"/>
</dbReference>
<dbReference type="RefSeq" id="WP_003854222.1">
    <property type="nucleotide sequence ID" value="NC_009342.1"/>
</dbReference>
<dbReference type="SMR" id="A4QBG8"/>
<dbReference type="GeneID" id="1021500"/>
<dbReference type="KEGG" id="cgt:cgR_0596"/>
<dbReference type="HOGENOM" id="CLU_072226_1_1_11"/>
<dbReference type="PhylomeDB" id="A4QBG8"/>
<dbReference type="Proteomes" id="UP000006698">
    <property type="component" value="Chromosome"/>
</dbReference>
<dbReference type="GO" id="GO:0015935">
    <property type="term" value="C:small ribosomal subunit"/>
    <property type="evidence" value="ECO:0007669"/>
    <property type="project" value="InterPro"/>
</dbReference>
<dbReference type="GO" id="GO:0019843">
    <property type="term" value="F:rRNA binding"/>
    <property type="evidence" value="ECO:0007669"/>
    <property type="project" value="UniProtKB-UniRule"/>
</dbReference>
<dbReference type="GO" id="GO:0003735">
    <property type="term" value="F:structural constituent of ribosome"/>
    <property type="evidence" value="ECO:0007669"/>
    <property type="project" value="InterPro"/>
</dbReference>
<dbReference type="GO" id="GO:0000049">
    <property type="term" value="F:tRNA binding"/>
    <property type="evidence" value="ECO:0007669"/>
    <property type="project" value="UniProtKB-UniRule"/>
</dbReference>
<dbReference type="GO" id="GO:0006412">
    <property type="term" value="P:translation"/>
    <property type="evidence" value="ECO:0007669"/>
    <property type="project" value="UniProtKB-UniRule"/>
</dbReference>
<dbReference type="CDD" id="cd14869">
    <property type="entry name" value="uS7_Bacteria"/>
    <property type="match status" value="1"/>
</dbReference>
<dbReference type="FunFam" id="1.10.455.10:FF:000001">
    <property type="entry name" value="30S ribosomal protein S7"/>
    <property type="match status" value="1"/>
</dbReference>
<dbReference type="Gene3D" id="1.10.455.10">
    <property type="entry name" value="Ribosomal protein S7 domain"/>
    <property type="match status" value="1"/>
</dbReference>
<dbReference type="HAMAP" id="MF_00480_B">
    <property type="entry name" value="Ribosomal_uS7_B"/>
    <property type="match status" value="1"/>
</dbReference>
<dbReference type="InterPro" id="IPR000235">
    <property type="entry name" value="Ribosomal_uS7"/>
</dbReference>
<dbReference type="InterPro" id="IPR005717">
    <property type="entry name" value="Ribosomal_uS7_bac/org-type"/>
</dbReference>
<dbReference type="InterPro" id="IPR020606">
    <property type="entry name" value="Ribosomal_uS7_CS"/>
</dbReference>
<dbReference type="InterPro" id="IPR023798">
    <property type="entry name" value="Ribosomal_uS7_dom"/>
</dbReference>
<dbReference type="InterPro" id="IPR036823">
    <property type="entry name" value="Ribosomal_uS7_dom_sf"/>
</dbReference>
<dbReference type="NCBIfam" id="TIGR01029">
    <property type="entry name" value="rpsG_bact"/>
    <property type="match status" value="1"/>
</dbReference>
<dbReference type="PANTHER" id="PTHR11205">
    <property type="entry name" value="RIBOSOMAL PROTEIN S7"/>
    <property type="match status" value="1"/>
</dbReference>
<dbReference type="Pfam" id="PF00177">
    <property type="entry name" value="Ribosomal_S7"/>
    <property type="match status" value="1"/>
</dbReference>
<dbReference type="PIRSF" id="PIRSF002122">
    <property type="entry name" value="RPS7p_RPS7a_RPS5e_RPS7o"/>
    <property type="match status" value="1"/>
</dbReference>
<dbReference type="SUPFAM" id="SSF47973">
    <property type="entry name" value="Ribosomal protein S7"/>
    <property type="match status" value="1"/>
</dbReference>
<dbReference type="PROSITE" id="PS00052">
    <property type="entry name" value="RIBOSOMAL_S7"/>
    <property type="match status" value="1"/>
</dbReference>
<name>RS7_CORGB</name>
<proteinExistence type="inferred from homology"/>
<protein>
    <recommendedName>
        <fullName evidence="1">Small ribosomal subunit protein uS7</fullName>
    </recommendedName>
    <alternativeName>
        <fullName evidence="2">30S ribosomal protein S7</fullName>
    </alternativeName>
</protein>
<keyword id="KW-0687">Ribonucleoprotein</keyword>
<keyword id="KW-0689">Ribosomal protein</keyword>
<keyword id="KW-0694">RNA-binding</keyword>
<keyword id="KW-0699">rRNA-binding</keyword>
<keyword id="KW-0820">tRNA-binding</keyword>
<evidence type="ECO:0000255" key="1">
    <source>
        <dbReference type="HAMAP-Rule" id="MF_00480"/>
    </source>
</evidence>
<evidence type="ECO:0000305" key="2"/>
<gene>
    <name evidence="1" type="primary">rpsG</name>
    <name type="ordered locus">cgR_0596</name>
</gene>
<accession>A4QBG8</accession>
<feature type="chain" id="PRO_0000344289" description="Small ribosomal subunit protein uS7">
    <location>
        <begin position="1"/>
        <end position="155"/>
    </location>
</feature>
<organism>
    <name type="scientific">Corynebacterium glutamicum (strain R)</name>
    <dbReference type="NCBI Taxonomy" id="340322"/>
    <lineage>
        <taxon>Bacteria</taxon>
        <taxon>Bacillati</taxon>
        <taxon>Actinomycetota</taxon>
        <taxon>Actinomycetes</taxon>
        <taxon>Mycobacteriales</taxon>
        <taxon>Corynebacteriaceae</taxon>
        <taxon>Corynebacterium</taxon>
    </lineage>
</organism>
<reference key="1">
    <citation type="journal article" date="2007" name="Microbiology">
        <title>Comparative analysis of the Corynebacterium glutamicum group and complete genome sequence of strain R.</title>
        <authorList>
            <person name="Yukawa H."/>
            <person name="Omumasaba C.A."/>
            <person name="Nonaka H."/>
            <person name="Kos P."/>
            <person name="Okai N."/>
            <person name="Suzuki N."/>
            <person name="Suda M."/>
            <person name="Tsuge Y."/>
            <person name="Watanabe J."/>
            <person name="Ikeda Y."/>
            <person name="Vertes A.A."/>
            <person name="Inui M."/>
        </authorList>
    </citation>
    <scope>NUCLEOTIDE SEQUENCE [LARGE SCALE GENOMIC DNA]</scope>
    <source>
        <strain>R</strain>
    </source>
</reference>
<sequence>MRKSAAPKRPVVQDPVYKSELVTQLVNKILIGGKKSTAERIVYGALEICREKTGTDPVGTLEKALGNVRPDLEVRSRRVGGATYQVPVDVRPERANTLALRWLVTFTRQRRENTMIERLANELLDAANGLGASVKRREDTHKMAEANRAFAHYRW</sequence>